<name>MURB_CLOPS</name>
<sequence>MNQYMEFYKLLGEFYNEEDITVDSPMSEHIYFRVGGPADILVTPVNEEQVVNTLKLCREYNVPYFILGNGSNILVKDGGISGVVIKFNKLNKITTEGNCVTAQSGALLKDVSKAALENNLRGFEFACGIPGSIGGAVFMNAGAYDGEMAHVIKSARVIDENCNIKNLTKEELELGYRSSIVMKKGYVVIEATIELESGEYASIKDKIDDLTNRRESKQPLEYPSAGSTFKRPEGYFAGKLIQDSGLKGFSIGGAAVSEKHSGFVINKGGATAKDVLDVIAHVQKTVKENFDVELHTEVRIIGRD</sequence>
<evidence type="ECO:0000255" key="1">
    <source>
        <dbReference type="HAMAP-Rule" id="MF_00037"/>
    </source>
</evidence>
<dbReference type="EC" id="1.3.1.98" evidence="1"/>
<dbReference type="EMBL" id="CP000312">
    <property type="protein sequence ID" value="ABG86626.1"/>
    <property type="molecule type" value="Genomic_DNA"/>
</dbReference>
<dbReference type="RefSeq" id="WP_011591453.1">
    <property type="nucleotide sequence ID" value="NC_008262.1"/>
</dbReference>
<dbReference type="SMR" id="Q0SW37"/>
<dbReference type="KEGG" id="cpr:CPR_0334"/>
<dbReference type="UniPathway" id="UPA00219"/>
<dbReference type="Proteomes" id="UP000001824">
    <property type="component" value="Chromosome"/>
</dbReference>
<dbReference type="GO" id="GO:0005829">
    <property type="term" value="C:cytosol"/>
    <property type="evidence" value="ECO:0007669"/>
    <property type="project" value="TreeGrafter"/>
</dbReference>
<dbReference type="GO" id="GO:0071949">
    <property type="term" value="F:FAD binding"/>
    <property type="evidence" value="ECO:0007669"/>
    <property type="project" value="InterPro"/>
</dbReference>
<dbReference type="GO" id="GO:0008762">
    <property type="term" value="F:UDP-N-acetylmuramate dehydrogenase activity"/>
    <property type="evidence" value="ECO:0007669"/>
    <property type="project" value="UniProtKB-UniRule"/>
</dbReference>
<dbReference type="GO" id="GO:0051301">
    <property type="term" value="P:cell division"/>
    <property type="evidence" value="ECO:0007669"/>
    <property type="project" value="UniProtKB-KW"/>
</dbReference>
<dbReference type="GO" id="GO:0071555">
    <property type="term" value="P:cell wall organization"/>
    <property type="evidence" value="ECO:0007669"/>
    <property type="project" value="UniProtKB-KW"/>
</dbReference>
<dbReference type="GO" id="GO:0009252">
    <property type="term" value="P:peptidoglycan biosynthetic process"/>
    <property type="evidence" value="ECO:0007669"/>
    <property type="project" value="UniProtKB-UniRule"/>
</dbReference>
<dbReference type="GO" id="GO:0008360">
    <property type="term" value="P:regulation of cell shape"/>
    <property type="evidence" value="ECO:0007669"/>
    <property type="project" value="UniProtKB-KW"/>
</dbReference>
<dbReference type="Gene3D" id="3.30.465.10">
    <property type="match status" value="1"/>
</dbReference>
<dbReference type="Gene3D" id="3.90.78.10">
    <property type="entry name" value="UDP-N-acetylenolpyruvoylglucosamine reductase, C-terminal domain"/>
    <property type="match status" value="1"/>
</dbReference>
<dbReference type="Gene3D" id="3.30.43.10">
    <property type="entry name" value="Uridine Diphospho-n-acetylenolpyruvylglucosamine Reductase, domain 2"/>
    <property type="match status" value="1"/>
</dbReference>
<dbReference type="HAMAP" id="MF_00037">
    <property type="entry name" value="MurB"/>
    <property type="match status" value="1"/>
</dbReference>
<dbReference type="InterPro" id="IPR016166">
    <property type="entry name" value="FAD-bd_PCMH"/>
</dbReference>
<dbReference type="InterPro" id="IPR036318">
    <property type="entry name" value="FAD-bd_PCMH-like_sf"/>
</dbReference>
<dbReference type="InterPro" id="IPR016167">
    <property type="entry name" value="FAD-bd_PCMH_sub1"/>
</dbReference>
<dbReference type="InterPro" id="IPR016169">
    <property type="entry name" value="FAD-bd_PCMH_sub2"/>
</dbReference>
<dbReference type="InterPro" id="IPR003170">
    <property type="entry name" value="MurB"/>
</dbReference>
<dbReference type="InterPro" id="IPR011601">
    <property type="entry name" value="MurB_C"/>
</dbReference>
<dbReference type="InterPro" id="IPR036635">
    <property type="entry name" value="MurB_C_sf"/>
</dbReference>
<dbReference type="InterPro" id="IPR006094">
    <property type="entry name" value="Oxid_FAD_bind_N"/>
</dbReference>
<dbReference type="NCBIfam" id="TIGR00179">
    <property type="entry name" value="murB"/>
    <property type="match status" value="1"/>
</dbReference>
<dbReference type="NCBIfam" id="NF010480">
    <property type="entry name" value="PRK13905.1"/>
    <property type="match status" value="1"/>
</dbReference>
<dbReference type="PANTHER" id="PTHR21071">
    <property type="entry name" value="UDP-N-ACETYLENOLPYRUVOYLGLUCOSAMINE REDUCTASE"/>
    <property type="match status" value="1"/>
</dbReference>
<dbReference type="PANTHER" id="PTHR21071:SF4">
    <property type="entry name" value="UDP-N-ACETYLENOLPYRUVOYLGLUCOSAMINE REDUCTASE"/>
    <property type="match status" value="1"/>
</dbReference>
<dbReference type="Pfam" id="PF01565">
    <property type="entry name" value="FAD_binding_4"/>
    <property type="match status" value="1"/>
</dbReference>
<dbReference type="Pfam" id="PF02873">
    <property type="entry name" value="MurB_C"/>
    <property type="match status" value="1"/>
</dbReference>
<dbReference type="SUPFAM" id="SSF56176">
    <property type="entry name" value="FAD-binding/transporter-associated domain-like"/>
    <property type="match status" value="1"/>
</dbReference>
<dbReference type="SUPFAM" id="SSF56194">
    <property type="entry name" value="Uridine diphospho-N-Acetylenolpyruvylglucosamine reductase, MurB, C-terminal domain"/>
    <property type="match status" value="1"/>
</dbReference>
<dbReference type="PROSITE" id="PS51387">
    <property type="entry name" value="FAD_PCMH"/>
    <property type="match status" value="1"/>
</dbReference>
<protein>
    <recommendedName>
        <fullName evidence="1">UDP-N-acetylenolpyruvoylglucosamine reductase</fullName>
        <ecNumber evidence="1">1.3.1.98</ecNumber>
    </recommendedName>
    <alternativeName>
        <fullName evidence="1">UDP-N-acetylmuramate dehydrogenase</fullName>
    </alternativeName>
</protein>
<gene>
    <name evidence="1" type="primary">murB</name>
    <name type="ordered locus">CPR_0334</name>
</gene>
<comment type="function">
    <text evidence="1">Cell wall formation.</text>
</comment>
<comment type="catalytic activity">
    <reaction evidence="1">
        <text>UDP-N-acetyl-alpha-D-muramate + NADP(+) = UDP-N-acetyl-3-O-(1-carboxyvinyl)-alpha-D-glucosamine + NADPH + H(+)</text>
        <dbReference type="Rhea" id="RHEA:12248"/>
        <dbReference type="ChEBI" id="CHEBI:15378"/>
        <dbReference type="ChEBI" id="CHEBI:57783"/>
        <dbReference type="ChEBI" id="CHEBI:58349"/>
        <dbReference type="ChEBI" id="CHEBI:68483"/>
        <dbReference type="ChEBI" id="CHEBI:70757"/>
        <dbReference type="EC" id="1.3.1.98"/>
    </reaction>
</comment>
<comment type="cofactor">
    <cofactor evidence="1">
        <name>FAD</name>
        <dbReference type="ChEBI" id="CHEBI:57692"/>
    </cofactor>
</comment>
<comment type="pathway">
    <text evidence="1">Cell wall biogenesis; peptidoglycan biosynthesis.</text>
</comment>
<comment type="subcellular location">
    <subcellularLocation>
        <location evidence="1">Cytoplasm</location>
    </subcellularLocation>
</comment>
<comment type="similarity">
    <text evidence="1">Belongs to the MurB family.</text>
</comment>
<organism>
    <name type="scientific">Clostridium perfringens (strain SM101 / Type A)</name>
    <dbReference type="NCBI Taxonomy" id="289380"/>
    <lineage>
        <taxon>Bacteria</taxon>
        <taxon>Bacillati</taxon>
        <taxon>Bacillota</taxon>
        <taxon>Clostridia</taxon>
        <taxon>Eubacteriales</taxon>
        <taxon>Clostridiaceae</taxon>
        <taxon>Clostridium</taxon>
    </lineage>
</organism>
<proteinExistence type="inferred from homology"/>
<accession>Q0SW37</accession>
<feature type="chain" id="PRO_1000002884" description="UDP-N-acetylenolpyruvoylglucosamine reductase">
    <location>
        <begin position="1"/>
        <end position="304"/>
    </location>
</feature>
<feature type="domain" description="FAD-binding PCMH-type" evidence="1">
    <location>
        <begin position="33"/>
        <end position="198"/>
    </location>
</feature>
<feature type="active site" evidence="1">
    <location>
        <position position="177"/>
    </location>
</feature>
<feature type="active site" description="Proton donor" evidence="1">
    <location>
        <position position="227"/>
    </location>
</feature>
<feature type="active site" evidence="1">
    <location>
        <position position="297"/>
    </location>
</feature>
<reference key="1">
    <citation type="journal article" date="2006" name="Genome Res.">
        <title>Skewed genomic variability in strains of the toxigenic bacterial pathogen, Clostridium perfringens.</title>
        <authorList>
            <person name="Myers G.S.A."/>
            <person name="Rasko D.A."/>
            <person name="Cheung J.K."/>
            <person name="Ravel J."/>
            <person name="Seshadri R."/>
            <person name="DeBoy R.T."/>
            <person name="Ren Q."/>
            <person name="Varga J."/>
            <person name="Awad M.M."/>
            <person name="Brinkac L.M."/>
            <person name="Daugherty S.C."/>
            <person name="Haft D.H."/>
            <person name="Dodson R.J."/>
            <person name="Madupu R."/>
            <person name="Nelson W.C."/>
            <person name="Rosovitz M.J."/>
            <person name="Sullivan S.A."/>
            <person name="Khouri H."/>
            <person name="Dimitrov G.I."/>
            <person name="Watkins K.L."/>
            <person name="Mulligan S."/>
            <person name="Benton J."/>
            <person name="Radune D."/>
            <person name="Fisher D.J."/>
            <person name="Atkins H.S."/>
            <person name="Hiscox T."/>
            <person name="Jost B.H."/>
            <person name="Billington S.J."/>
            <person name="Songer J.G."/>
            <person name="McClane B.A."/>
            <person name="Titball R.W."/>
            <person name="Rood J.I."/>
            <person name="Melville S.B."/>
            <person name="Paulsen I.T."/>
        </authorList>
    </citation>
    <scope>NUCLEOTIDE SEQUENCE [LARGE SCALE GENOMIC DNA]</scope>
    <source>
        <strain>SM101 / Type A</strain>
    </source>
</reference>
<keyword id="KW-0131">Cell cycle</keyword>
<keyword id="KW-0132">Cell division</keyword>
<keyword id="KW-0133">Cell shape</keyword>
<keyword id="KW-0961">Cell wall biogenesis/degradation</keyword>
<keyword id="KW-0963">Cytoplasm</keyword>
<keyword id="KW-0274">FAD</keyword>
<keyword id="KW-0285">Flavoprotein</keyword>
<keyword id="KW-0521">NADP</keyword>
<keyword id="KW-0560">Oxidoreductase</keyword>
<keyword id="KW-0573">Peptidoglycan synthesis</keyword>